<comment type="function">
    <text evidence="1">May be involved in the energy metabolism of the mature sperm.</text>
</comment>
<comment type="subcellular location">
    <subcellularLocation>
        <location evidence="1">Cytoplasm</location>
    </subcellularLocation>
</comment>
<comment type="tissue specificity">
    <text>Testis.</text>
</comment>
<comment type="developmental stage">
    <text>Specifically expressed in late haploid male germ cells.</text>
</comment>
<comment type="similarity">
    <text evidence="3">Belongs to the ACBP family.</text>
</comment>
<proteinExistence type="evidence at transcript level"/>
<reference key="1">
    <citation type="journal article" date="1999" name="Gene">
        <title>Rat endozepine-like peptide (ELP): cDNA cloning, genomic organization and tissue-specific expression.</title>
        <authorList>
            <person name="Pusch W."/>
            <person name="Jaehner D."/>
            <person name="Spiess A.N."/>
            <person name="Ivell R."/>
        </authorList>
    </citation>
    <scope>NUCLEOTIDE SEQUENCE [GENOMIC DNA / MRNA]</scope>
</reference>
<organism>
    <name type="scientific">Rattus norvegicus</name>
    <name type="common">Rat</name>
    <dbReference type="NCBI Taxonomy" id="10116"/>
    <lineage>
        <taxon>Eukaryota</taxon>
        <taxon>Metazoa</taxon>
        <taxon>Chordata</taxon>
        <taxon>Craniata</taxon>
        <taxon>Vertebrata</taxon>
        <taxon>Euteleostomi</taxon>
        <taxon>Mammalia</taxon>
        <taxon>Eutheria</taxon>
        <taxon>Euarchontoglires</taxon>
        <taxon>Glires</taxon>
        <taxon>Rodentia</taxon>
        <taxon>Myomorpha</taxon>
        <taxon>Muroidea</taxon>
        <taxon>Muridae</taxon>
        <taxon>Murinae</taxon>
        <taxon>Rattus</taxon>
    </lineage>
</organism>
<accession>P56702</accession>
<accession>Q9QUJ9</accession>
<protein>
    <recommendedName>
        <fullName>Diazepam-binding inhibitor-like 5</fullName>
    </recommendedName>
    <alternativeName>
        <fullName>Endozepine-like peptide</fullName>
        <shortName>ELP</shortName>
    </alternativeName>
</protein>
<evidence type="ECO:0000250" key="1"/>
<evidence type="ECO:0000255" key="2">
    <source>
        <dbReference type="PROSITE-ProRule" id="PRU00573"/>
    </source>
</evidence>
<evidence type="ECO:0000305" key="3"/>
<gene>
    <name type="primary">Dbil5</name>
</gene>
<feature type="chain" id="PRO_0000214025" description="Diazepam-binding inhibitor-like 5">
    <location>
        <begin position="1"/>
        <end position="87"/>
    </location>
</feature>
<feature type="domain" description="ACB" evidence="2">
    <location>
        <begin position="2"/>
        <end position="87"/>
    </location>
</feature>
<feature type="binding site" evidence="1">
    <location>
        <begin position="29"/>
        <end position="33"/>
    </location>
    <ligand>
        <name>an acyl-CoA</name>
        <dbReference type="ChEBI" id="CHEBI:58342"/>
    </ligand>
</feature>
<feature type="binding site" evidence="1">
    <location>
        <position position="55"/>
    </location>
    <ligand>
        <name>an acyl-CoA</name>
        <dbReference type="ChEBI" id="CHEBI:58342"/>
    </ligand>
</feature>
<feature type="binding site" evidence="1">
    <location>
        <position position="74"/>
    </location>
    <ligand>
        <name>an acyl-CoA</name>
        <dbReference type="ChEBI" id="CHEBI:58342"/>
    </ligand>
</feature>
<name>DBIL5_RAT</name>
<dbReference type="EMBL" id="AF128531">
    <property type="protein sequence ID" value="AAD32607.1"/>
    <property type="molecule type" value="mRNA"/>
</dbReference>
<dbReference type="EMBL" id="AF128092">
    <property type="protein sequence ID" value="AAD32606.1"/>
    <property type="molecule type" value="Genomic_DNA"/>
</dbReference>
<dbReference type="RefSeq" id="NP_067607.1">
    <property type="nucleotide sequence ID" value="NM_021596.2"/>
</dbReference>
<dbReference type="SMR" id="P56702"/>
<dbReference type="FunCoup" id="P56702">
    <property type="interactions" value="191"/>
</dbReference>
<dbReference type="STRING" id="10116.ENSRNOP00000010227"/>
<dbReference type="iPTMnet" id="P56702"/>
<dbReference type="PhosphoSitePlus" id="P56702"/>
<dbReference type="PaxDb" id="10116-ENSRNOP00000010227"/>
<dbReference type="GeneID" id="59116"/>
<dbReference type="KEGG" id="rno:59116"/>
<dbReference type="AGR" id="RGD:68360"/>
<dbReference type="CTD" id="13168"/>
<dbReference type="RGD" id="68360">
    <property type="gene designation" value="Dbil5"/>
</dbReference>
<dbReference type="eggNOG" id="KOG0817">
    <property type="taxonomic scope" value="Eukaryota"/>
</dbReference>
<dbReference type="HOGENOM" id="CLU_118853_4_1_1"/>
<dbReference type="InParanoid" id="P56702"/>
<dbReference type="OrthoDB" id="346910at2759"/>
<dbReference type="PhylomeDB" id="P56702"/>
<dbReference type="TreeFam" id="TF335802"/>
<dbReference type="PRO" id="PR:P56702"/>
<dbReference type="Proteomes" id="UP000002494">
    <property type="component" value="Chromosome 10"/>
</dbReference>
<dbReference type="Bgee" id="ENSRNOG00000007771">
    <property type="expression patterns" value="Expressed in testis and 18 other cell types or tissues"/>
</dbReference>
<dbReference type="GO" id="GO:0005737">
    <property type="term" value="C:cytoplasm"/>
    <property type="evidence" value="ECO:0007669"/>
    <property type="project" value="UniProtKB-SubCell"/>
</dbReference>
<dbReference type="GO" id="GO:0000062">
    <property type="term" value="F:fatty-acyl-CoA binding"/>
    <property type="evidence" value="ECO:0000318"/>
    <property type="project" value="GO_Central"/>
</dbReference>
<dbReference type="GO" id="GO:0006637">
    <property type="term" value="P:acyl-CoA metabolic process"/>
    <property type="evidence" value="ECO:0000304"/>
    <property type="project" value="RGD"/>
</dbReference>
<dbReference type="GO" id="GO:0006631">
    <property type="term" value="P:fatty acid metabolic process"/>
    <property type="evidence" value="ECO:0000318"/>
    <property type="project" value="GO_Central"/>
</dbReference>
<dbReference type="GO" id="GO:0007283">
    <property type="term" value="P:spermatogenesis"/>
    <property type="evidence" value="ECO:0000270"/>
    <property type="project" value="RGD"/>
</dbReference>
<dbReference type="CDD" id="cd00435">
    <property type="entry name" value="ACBP"/>
    <property type="match status" value="1"/>
</dbReference>
<dbReference type="FunFam" id="1.20.80.10:FF:000042">
    <property type="entry name" value="diazepam-binding inhibitor-like 5"/>
    <property type="match status" value="1"/>
</dbReference>
<dbReference type="Gene3D" id="1.20.80.10">
    <property type="match status" value="1"/>
</dbReference>
<dbReference type="InterPro" id="IPR022408">
    <property type="entry name" value="Acyl-CoA-binding_prot_CS"/>
</dbReference>
<dbReference type="InterPro" id="IPR000582">
    <property type="entry name" value="Acyl-CoA-binding_protein"/>
</dbReference>
<dbReference type="InterPro" id="IPR035984">
    <property type="entry name" value="Acyl-CoA-binding_sf"/>
</dbReference>
<dbReference type="InterPro" id="IPR014352">
    <property type="entry name" value="FERM/acyl-CoA-bd_prot_sf"/>
</dbReference>
<dbReference type="PANTHER" id="PTHR23310">
    <property type="entry name" value="ACYL-COA-BINDING PROTEIN, ACBP"/>
    <property type="match status" value="1"/>
</dbReference>
<dbReference type="PANTHER" id="PTHR23310:SF13">
    <property type="entry name" value="DIAZEPAM-BINDING INHIBITOR-LIKE 5"/>
    <property type="match status" value="1"/>
</dbReference>
<dbReference type="Pfam" id="PF00887">
    <property type="entry name" value="ACBP"/>
    <property type="match status" value="1"/>
</dbReference>
<dbReference type="PRINTS" id="PR00689">
    <property type="entry name" value="ACOABINDINGP"/>
</dbReference>
<dbReference type="SUPFAM" id="SSF47027">
    <property type="entry name" value="Acyl-CoA binding protein"/>
    <property type="match status" value="1"/>
</dbReference>
<dbReference type="PROSITE" id="PS00880">
    <property type="entry name" value="ACB_1"/>
    <property type="match status" value="1"/>
</dbReference>
<dbReference type="PROSITE" id="PS51228">
    <property type="entry name" value="ACB_2"/>
    <property type="match status" value="1"/>
</dbReference>
<keyword id="KW-0963">Cytoplasm</keyword>
<keyword id="KW-0446">Lipid-binding</keyword>
<keyword id="KW-1185">Reference proteome</keyword>
<keyword id="KW-0813">Transport</keyword>
<sequence length="87" mass="9864">MSQVEFEMACASLKQLKGPLSDQEKLLVYSFYKQATQGDCNIPVPPATDVKAKAKWEAWMVNKGMSKMDAMRIYIAKVEELKKNETC</sequence>